<feature type="chain" id="PRO_0000357955" description="NADH-quinone oxidoreductase subunit D">
    <location>
        <begin position="1"/>
        <end position="435"/>
    </location>
</feature>
<accession>Q5GXT4</accession>
<gene>
    <name evidence="1" type="primary">nuoD</name>
    <name type="ordered locus">XOO3233</name>
</gene>
<reference key="1">
    <citation type="journal article" date="2005" name="Nucleic Acids Res.">
        <title>The genome sequence of Xanthomonas oryzae pathovar oryzae KACC10331, the bacterial blight pathogen of rice.</title>
        <authorList>
            <person name="Lee B.-M."/>
            <person name="Park Y.-J."/>
            <person name="Park D.-S."/>
            <person name="Kang H.-W."/>
            <person name="Kim J.-G."/>
            <person name="Song E.-S."/>
            <person name="Park I.-C."/>
            <person name="Yoon U.-H."/>
            <person name="Hahn J.-H."/>
            <person name="Koo B.-S."/>
            <person name="Lee G.-B."/>
            <person name="Kim H."/>
            <person name="Park H.-S."/>
            <person name="Yoon K.-O."/>
            <person name="Kim J.-H."/>
            <person name="Jung C.-H."/>
            <person name="Koh N.-H."/>
            <person name="Seo J.-S."/>
            <person name="Go S.-J."/>
        </authorList>
    </citation>
    <scope>NUCLEOTIDE SEQUENCE [LARGE SCALE GENOMIC DNA]</scope>
    <source>
        <strain>KACC10331 / KXO85</strain>
    </source>
</reference>
<dbReference type="EC" id="7.1.1.-" evidence="1"/>
<dbReference type="EMBL" id="AE013598">
    <property type="protein sequence ID" value="AAW76487.1"/>
    <property type="molecule type" value="Genomic_DNA"/>
</dbReference>
<dbReference type="SMR" id="Q5GXT4"/>
<dbReference type="STRING" id="291331.XOO3233"/>
<dbReference type="KEGG" id="xoo:XOO3233"/>
<dbReference type="HOGENOM" id="CLU_015134_1_1_6"/>
<dbReference type="Proteomes" id="UP000006735">
    <property type="component" value="Chromosome"/>
</dbReference>
<dbReference type="GO" id="GO:0005886">
    <property type="term" value="C:plasma membrane"/>
    <property type="evidence" value="ECO:0007669"/>
    <property type="project" value="UniProtKB-SubCell"/>
</dbReference>
<dbReference type="GO" id="GO:0051287">
    <property type="term" value="F:NAD binding"/>
    <property type="evidence" value="ECO:0007669"/>
    <property type="project" value="InterPro"/>
</dbReference>
<dbReference type="GO" id="GO:0050136">
    <property type="term" value="F:NADH:ubiquinone reductase (non-electrogenic) activity"/>
    <property type="evidence" value="ECO:0007669"/>
    <property type="project" value="UniProtKB-UniRule"/>
</dbReference>
<dbReference type="GO" id="GO:0048038">
    <property type="term" value="F:quinone binding"/>
    <property type="evidence" value="ECO:0007669"/>
    <property type="project" value="UniProtKB-KW"/>
</dbReference>
<dbReference type="FunFam" id="1.10.645.10:FF:000005">
    <property type="entry name" value="NADH-quinone oxidoreductase subunit D"/>
    <property type="match status" value="1"/>
</dbReference>
<dbReference type="Gene3D" id="1.10.645.10">
    <property type="entry name" value="Cytochrome-c3 Hydrogenase, chain B"/>
    <property type="match status" value="1"/>
</dbReference>
<dbReference type="HAMAP" id="MF_01358">
    <property type="entry name" value="NDH1_NuoD"/>
    <property type="match status" value="1"/>
</dbReference>
<dbReference type="InterPro" id="IPR001135">
    <property type="entry name" value="NADH_Q_OxRdtase_suD"/>
</dbReference>
<dbReference type="InterPro" id="IPR014029">
    <property type="entry name" value="NADH_UbQ_OxRdtase_49kDa_CS"/>
</dbReference>
<dbReference type="InterPro" id="IPR022885">
    <property type="entry name" value="NDH1_su_D/H"/>
</dbReference>
<dbReference type="InterPro" id="IPR029014">
    <property type="entry name" value="NiFe-Hase_large"/>
</dbReference>
<dbReference type="NCBIfam" id="TIGR01962">
    <property type="entry name" value="NuoD"/>
    <property type="match status" value="1"/>
</dbReference>
<dbReference type="NCBIfam" id="NF004739">
    <property type="entry name" value="PRK06075.1"/>
    <property type="match status" value="1"/>
</dbReference>
<dbReference type="PANTHER" id="PTHR11993:SF10">
    <property type="entry name" value="NADH DEHYDROGENASE [UBIQUINONE] IRON-SULFUR PROTEIN 2, MITOCHONDRIAL"/>
    <property type="match status" value="1"/>
</dbReference>
<dbReference type="PANTHER" id="PTHR11993">
    <property type="entry name" value="NADH-UBIQUINONE OXIDOREDUCTASE 49 KDA SUBUNIT"/>
    <property type="match status" value="1"/>
</dbReference>
<dbReference type="Pfam" id="PF00346">
    <property type="entry name" value="Complex1_49kDa"/>
    <property type="match status" value="1"/>
</dbReference>
<dbReference type="SUPFAM" id="SSF56762">
    <property type="entry name" value="HydB/Nqo4-like"/>
    <property type="match status" value="1"/>
</dbReference>
<dbReference type="PROSITE" id="PS00535">
    <property type="entry name" value="COMPLEX1_49K"/>
    <property type="match status" value="1"/>
</dbReference>
<comment type="function">
    <text evidence="1">NDH-1 shuttles electrons from NADH, via FMN and iron-sulfur (Fe-S) centers, to quinones in the respiratory chain. The immediate electron acceptor for the enzyme in this species is believed to be ubiquinone. Couples the redox reaction to proton translocation (for every two electrons transferred, four hydrogen ions are translocated across the cytoplasmic membrane), and thus conserves the redox energy in a proton gradient.</text>
</comment>
<comment type="catalytic activity">
    <reaction evidence="1">
        <text>a quinone + NADH + 5 H(+)(in) = a quinol + NAD(+) + 4 H(+)(out)</text>
        <dbReference type="Rhea" id="RHEA:57888"/>
        <dbReference type="ChEBI" id="CHEBI:15378"/>
        <dbReference type="ChEBI" id="CHEBI:24646"/>
        <dbReference type="ChEBI" id="CHEBI:57540"/>
        <dbReference type="ChEBI" id="CHEBI:57945"/>
        <dbReference type="ChEBI" id="CHEBI:132124"/>
    </reaction>
</comment>
<comment type="subunit">
    <text evidence="1">NDH-1 is composed of 14 different subunits. Subunits NuoB, C, D, E, F, and G constitute the peripheral sector of the complex.</text>
</comment>
<comment type="subcellular location">
    <subcellularLocation>
        <location evidence="1">Cell inner membrane</location>
        <topology evidence="1">Peripheral membrane protein</topology>
        <orientation evidence="1">Cytoplasmic side</orientation>
    </subcellularLocation>
</comment>
<comment type="similarity">
    <text evidence="1">Belongs to the complex I 49 kDa subunit family.</text>
</comment>
<evidence type="ECO:0000255" key="1">
    <source>
        <dbReference type="HAMAP-Rule" id="MF_01358"/>
    </source>
</evidence>
<name>NUOD_XANOR</name>
<protein>
    <recommendedName>
        <fullName evidence="1">NADH-quinone oxidoreductase subunit D</fullName>
        <ecNumber evidence="1">7.1.1.-</ecNumber>
    </recommendedName>
    <alternativeName>
        <fullName evidence="1">NADH dehydrogenase I subunit D</fullName>
    </alternativeName>
    <alternativeName>
        <fullName evidence="1">NDH-1 subunit D</fullName>
    </alternativeName>
</protein>
<organism>
    <name type="scientific">Xanthomonas oryzae pv. oryzae (strain KACC10331 / KXO85)</name>
    <dbReference type="NCBI Taxonomy" id="291331"/>
    <lineage>
        <taxon>Bacteria</taxon>
        <taxon>Pseudomonadati</taxon>
        <taxon>Pseudomonadota</taxon>
        <taxon>Gammaproteobacteria</taxon>
        <taxon>Lysobacterales</taxon>
        <taxon>Lysobacteraceae</taxon>
        <taxon>Xanthomonas</taxon>
    </lineage>
</organism>
<sequence>MSEFRQATDAFASNPAESKQEIRNYTMNFGPQHPAAHGVLRLILEMDGETVVRADPHIGLLHRGTEKLAESKPFNQSVPYMDRLDYVSMMCNEHAYVRAIESLMGIEAPERAQYIRTMFDEITRIKNHLMWVGSNALDLGAMAVMLYAFREREELMDVYEAVSGARMHAAYYRPGGVYRDLPDRMPRYKESRWHKGGALKKLNAAREGSMLDFLEDFTNTFPLRVDEYETLLTDNRIWKQRTVDVGIISPDLARAWGMTGPMLRGSGIEWDLRKKQPYAKYDAVDFDIPVGTNGDCYDRYLVRVAEMRESNRIIKQCVKWLKANPGPVMVTNFKVAPPSREGMKDDMEALIHHFKLFSEGYCVPAGETYSAVEAPKGEFGCYLMSDGANKPFRVHLRAPGFAHLSSMDAVVRGYLLADVVAMIGTYDLVFGEVDR</sequence>
<proteinExistence type="inferred from homology"/>
<keyword id="KW-0997">Cell inner membrane</keyword>
<keyword id="KW-1003">Cell membrane</keyword>
<keyword id="KW-0472">Membrane</keyword>
<keyword id="KW-0520">NAD</keyword>
<keyword id="KW-0874">Quinone</keyword>
<keyword id="KW-1185">Reference proteome</keyword>
<keyword id="KW-1278">Translocase</keyword>
<keyword id="KW-0813">Transport</keyword>
<keyword id="KW-0830">Ubiquinone</keyword>